<sequence>MVGHLSEGAIEVMIQQENTSIKPILQVINIRPISTGNRSPRYRLLMSDGLNTLSSFMLATQLNTLVEGGQLASNCVCQVHKFIVNTLKDGRKVVVLMDLEVMKSAEDVGLKIGNPVPYNEGYGQQQQQQQQQQQQAVPSPASAATPPASKPQPQNGSLGMGSTAAKAYGASKPFGKPAGTGLLQPSGGTQSKVVPIASLTPYQSKWTICARVTNKSQIRTWSNSRGEGKLFSLELVDESGEIRATAFNEQVDKFFPLIEVNKVYYFSKGALKIANKQFSAVKNDYEMTFNNETSVLPCEDGHHLPTVQFDFTGIGDLESKAKDALVDIIGICKSYEDSIKITVKSNNREVAKRNIYLMDMSGKVVTTTLWGEDADKFDGSRQPVMAIKGARVSDFGGRSLSVLSSSTVIVNPDIPEAYKLRGWFDSEGQALDGVSISDHRSGGAGGGNTNWKTLHEAKSENLGQGDKADYFSTVAAVVFLRKENCMYQACPTQDCNKKVIDQQNGLYRCEKCDREFPNFKYRMILSANIADFQENQWVTCFQESAEAILGQNTMYLGELKEKNEQAFEEVFQNANFRSFTFRIRVKLETYNDESRIKATVMDVKPVDFRDYGRRLIANIRKNM</sequence>
<accession>Q8VEE4</accession>
<accession>Q3TEJ8</accession>
<proteinExistence type="evidence at protein level"/>
<organism>
    <name type="scientific">Mus musculus</name>
    <name type="common">Mouse</name>
    <dbReference type="NCBI Taxonomy" id="10090"/>
    <lineage>
        <taxon>Eukaryota</taxon>
        <taxon>Metazoa</taxon>
        <taxon>Chordata</taxon>
        <taxon>Craniata</taxon>
        <taxon>Vertebrata</taxon>
        <taxon>Euteleostomi</taxon>
        <taxon>Mammalia</taxon>
        <taxon>Eutheria</taxon>
        <taxon>Euarchontoglires</taxon>
        <taxon>Glires</taxon>
        <taxon>Rodentia</taxon>
        <taxon>Myomorpha</taxon>
        <taxon>Muroidea</taxon>
        <taxon>Muridae</taxon>
        <taxon>Murinae</taxon>
        <taxon>Mus</taxon>
        <taxon>Mus</taxon>
    </lineage>
</organism>
<evidence type="ECO:0000250" key="1">
    <source>
        <dbReference type="UniProtKB" id="P27694"/>
    </source>
</evidence>
<evidence type="ECO:0000255" key="2"/>
<evidence type="ECO:0000256" key="3">
    <source>
        <dbReference type="SAM" id="MobiDB-lite"/>
    </source>
</evidence>
<evidence type="ECO:0000269" key="4">
    <source>
    </source>
</evidence>
<evidence type="ECO:0000269" key="5">
    <source>
    </source>
</evidence>
<evidence type="ECO:0000305" key="6"/>
<evidence type="ECO:0007744" key="7">
    <source>
    </source>
</evidence>
<gene>
    <name type="primary">Rpa1</name>
</gene>
<name>RFA1_MOUSE</name>
<feature type="chain" id="PRO_0000097261" description="Replication protein A 70 kDa DNA-binding subunit">
    <location>
        <begin position="1"/>
        <end position="623"/>
    </location>
</feature>
<feature type="DNA-binding region" description="OB">
    <location>
        <begin position="206"/>
        <end position="290"/>
    </location>
</feature>
<feature type="zinc finger region" description="C4-type" evidence="2">
    <location>
        <begin position="490"/>
        <end position="512"/>
    </location>
</feature>
<feature type="region of interest" description="Disordered" evidence="3">
    <location>
        <begin position="116"/>
        <end position="163"/>
    </location>
</feature>
<feature type="compositionally biased region" description="Low complexity" evidence="3">
    <location>
        <begin position="124"/>
        <end position="154"/>
    </location>
</feature>
<feature type="modified residue" description="N-acetylmethionine" evidence="1">
    <location>
        <position position="1"/>
    </location>
</feature>
<feature type="modified residue" description="N6-acetyllysine; alternate" evidence="7">
    <location>
        <position position="172"/>
    </location>
</feature>
<feature type="modified residue" description="N6-acetyllysine; alternate" evidence="7">
    <location>
        <position position="176"/>
    </location>
</feature>
<feature type="modified residue" description="Phosphothreonine" evidence="1">
    <location>
        <position position="189"/>
    </location>
</feature>
<feature type="modified residue" description="Phosphothreonine" evidence="1">
    <location>
        <position position="200"/>
    </location>
</feature>
<feature type="modified residue" description="N6-acetyllysine; alternate" evidence="1">
    <location>
        <position position="268"/>
    </location>
</feature>
<feature type="modified residue" description="Phosphoserine" evidence="1">
    <location>
        <position position="393"/>
    </location>
</feature>
<feature type="cross-link" description="Glycyl lysine isopeptide (Lys-Gly) (interchain with G-Cter in ubiquitin)" evidence="1">
    <location>
        <position position="22"/>
    </location>
</feature>
<feature type="cross-link" description="Glycyl lysine isopeptide (Lys-Gly) (interchain with G-Cter in ubiquitin)" evidence="1">
    <location>
        <position position="88"/>
    </location>
</feature>
<feature type="cross-link" description="Glycyl lysine isopeptide (Lys-Gly) (interchain with G-Cter in ubiquitin); alternate" evidence="1">
    <location>
        <position position="172"/>
    </location>
</feature>
<feature type="cross-link" description="Glycyl lysine isopeptide (Lys-Gly) (interchain with G-Cter in ubiquitin); alternate" evidence="1">
    <location>
        <position position="176"/>
    </location>
</feature>
<feature type="cross-link" description="Glycyl lysine isopeptide (Lys-Gly) (interchain with G-Cter in ubiquitin)" evidence="1">
    <location>
        <position position="192"/>
    </location>
</feature>
<feature type="cross-link" description="Glycyl lysine isopeptide (Lys-Gly) (interchain with G-Cter in ubiquitin)" evidence="1">
    <location>
        <position position="229"/>
    </location>
</feature>
<feature type="cross-link" description="Glycyl lysine isopeptide (Lys-Gly) (interchain with G-Cter in ubiquitin)" evidence="1">
    <location>
        <position position="253"/>
    </location>
</feature>
<feature type="cross-link" description="Glycyl lysine isopeptide (Lys-Gly) (interchain with G-Cter in ubiquitin); alternate" evidence="1">
    <location>
        <position position="268"/>
    </location>
</feature>
<feature type="cross-link" description="Glycyl lysine isopeptide (Lys-Gly) (interchain with G-Cter in ubiquitin)" evidence="1">
    <location>
        <position position="276"/>
    </location>
</feature>
<feature type="cross-link" description="Glycyl lysine isopeptide (Lys-Gly) (interchain with G-Cter in ubiquitin)" evidence="1">
    <location>
        <position position="340"/>
    </location>
</feature>
<feature type="cross-link" description="Glycyl lysine isopeptide (Lys-Gly) (interchain with G-Cter in ubiquitin)" evidence="1">
    <location>
        <position position="419"/>
    </location>
</feature>
<feature type="cross-link" description="Glycyl lysine isopeptide (Lys-Gly) (interchain with G-Cter in SUMO)" evidence="1">
    <location>
        <position position="458"/>
    </location>
</feature>
<feature type="cross-link" description="Glycyl lysine isopeptide (Lys-Gly) (interchain with G-Cter in ubiquitin)" evidence="1">
    <location>
        <position position="467"/>
    </location>
</feature>
<feature type="cross-link" description="Glycyl lysine isopeptide (Lys-Gly) (interchain with G-Cter in ubiquitin)" evidence="1">
    <location>
        <position position="562"/>
    </location>
</feature>
<feature type="cross-link" description="Glycyl lysine isopeptide (Lys-Gly) (interchain with G-Cter in SUMO)" evidence="1">
    <location>
        <position position="586"/>
    </location>
</feature>
<feature type="sequence variant" evidence="4">
    <location>
        <begin position="134"/>
        <end position="135"/>
    </location>
</feature>
<protein>
    <recommendedName>
        <fullName>Replication protein A 70 kDa DNA-binding subunit</fullName>
        <shortName>RP-A p70</shortName>
    </recommendedName>
    <alternativeName>
        <fullName>Replication factor A protein 1</fullName>
        <shortName>RF-A protein 1</shortName>
    </alternativeName>
</protein>
<comment type="function">
    <text evidence="1">As part of the heterotrimeric replication protein A complex (RPA/RP-A), binds and stabilizes single-stranded DNA intermediates, that form during DNA replication or upon DNA stress. It prevents their reannealing and in parallel, recruits and activates different proteins and complexes involved in DNA metabolism. Thereby, it plays an essential role both in DNA replication and the cellular response to DNA damage. In the cellular response to DNA damage, the RPA complex controls DNA repair and DNA damage checkpoint activation. Through recruitment of ATRIP activates the ATR kinase a master regulator of the DNA damage response. It is required for the recruitment of the DNA double-strand break repair factors RAD51 and RAD52 to chromatin in response to DNA damage. Also recruits to sites of DNA damage proteins like XPA and XPG that are involved in nucleotide excision repair and is required for this mechanism of DNA repair. Also plays a role in base excision repair (BER) probably through interaction with UNG. Also recruits SMARCAL1/HARP, which is involved in replication fork restart, to sites of DNA damage. May also play a role in telomere maintenance.</text>
</comment>
<comment type="subunit">
    <text evidence="1 5">Component of the canonical replication protein A complex (RPA), a heterotrimer composed of RPA1, RPA2 and RPA3 (By similarity). The DNA-binding activity may reside exclusively on the RPA1 subunit (By similarity). Interacts with PRPF19; the PRP19-CDC5L complex is recruited to the sites of DNA repair where it ubiquitinates the replication protein A complex (RPA) (By similarity). Interacts with RIPK1 (By similarity). Interacts with the polymerase alpha subunit POLA1/p180; this interaction stabilizes the replicative complex and reduces the misincorporation rate of DNA polymerase alpha by acting as a fidelity clamp (By similarity). Interacts with RAD51 and SENP6 to regulate DNA repair (By similarity). Interacts with HELB; this interaction promotes HELB recruitment to chromatin following DNA damage (By similarity). Interacts with PRIMPOL; leading to recruit PRIMPOL on chromatin and stimulate its DNA primase activity (By similarity). Interacts with XPA; the interaction is direct and associates XPA with the RPA complex (By similarity). Interacts with ETAA1; the interaction is direct and promotes ETAA1 recruitment at stalled replication forks (By similarity). Interacts with RPA1; this interaction associates HROB with the RPA complex (PubMed:31467087). Interacts (when poly-ADP-ribosylated) with HTATSF1 (By similarity).</text>
</comment>
<comment type="subcellular location">
    <subcellularLocation>
        <location evidence="1">Nucleus</location>
    </subcellularLocation>
    <subcellularLocation>
        <location evidence="1">Nucleus</location>
        <location evidence="1">PML body</location>
    </subcellularLocation>
</comment>
<comment type="PTM">
    <text evidence="1">DNA damage-induced 'Lys-63'-linked polyubiquitination by PRPF19 mediates ATRIP recruitment to the RPA complex at sites of DNA damage and activation of ATR. Ubiquitinated by RFWD3 at stalled replication forks in response to DNA damage: ubiquitination by RFWD3 does not lead to degradation by the proteasome and promotes removal of the RPA complex from stalled replication forks, promoting homologous recombination.</text>
</comment>
<comment type="PTM">
    <text evidence="1">Sumoylated on lysine residues Lys-458 and Lys-586, with Lys-458 being the major site. Sumoylation promotes recruitment of RAD51 to the DNA damage foci to initiate DNA repair through homologous recombination. Desumoylated by SENP6 (By similarity).</text>
</comment>
<comment type="PTM">
    <text evidence="1">Poly-ADP-ribosylated by PARP1; promoting recruitment of HTATSF1.</text>
</comment>
<comment type="similarity">
    <text evidence="6">Belongs to the replication factor A protein 1 family.</text>
</comment>
<reference key="1">
    <citation type="journal article" date="2005" name="Science">
        <title>The transcriptional landscape of the mammalian genome.</title>
        <authorList>
            <person name="Carninci P."/>
            <person name="Kasukawa T."/>
            <person name="Katayama S."/>
            <person name="Gough J."/>
            <person name="Frith M.C."/>
            <person name="Maeda N."/>
            <person name="Oyama R."/>
            <person name="Ravasi T."/>
            <person name="Lenhard B."/>
            <person name="Wells C."/>
            <person name="Kodzius R."/>
            <person name="Shimokawa K."/>
            <person name="Bajic V.B."/>
            <person name="Brenner S.E."/>
            <person name="Batalov S."/>
            <person name="Forrest A.R."/>
            <person name="Zavolan M."/>
            <person name="Davis M.J."/>
            <person name="Wilming L.G."/>
            <person name="Aidinis V."/>
            <person name="Allen J.E."/>
            <person name="Ambesi-Impiombato A."/>
            <person name="Apweiler R."/>
            <person name="Aturaliya R.N."/>
            <person name="Bailey T.L."/>
            <person name="Bansal M."/>
            <person name="Baxter L."/>
            <person name="Beisel K.W."/>
            <person name="Bersano T."/>
            <person name="Bono H."/>
            <person name="Chalk A.M."/>
            <person name="Chiu K.P."/>
            <person name="Choudhary V."/>
            <person name="Christoffels A."/>
            <person name="Clutterbuck D.R."/>
            <person name="Crowe M.L."/>
            <person name="Dalla E."/>
            <person name="Dalrymple B.P."/>
            <person name="de Bono B."/>
            <person name="Della Gatta G."/>
            <person name="di Bernardo D."/>
            <person name="Down T."/>
            <person name="Engstrom P."/>
            <person name="Fagiolini M."/>
            <person name="Faulkner G."/>
            <person name="Fletcher C.F."/>
            <person name="Fukushima T."/>
            <person name="Furuno M."/>
            <person name="Futaki S."/>
            <person name="Gariboldi M."/>
            <person name="Georgii-Hemming P."/>
            <person name="Gingeras T.R."/>
            <person name="Gojobori T."/>
            <person name="Green R.E."/>
            <person name="Gustincich S."/>
            <person name="Harbers M."/>
            <person name="Hayashi Y."/>
            <person name="Hensch T.K."/>
            <person name="Hirokawa N."/>
            <person name="Hill D."/>
            <person name="Huminiecki L."/>
            <person name="Iacono M."/>
            <person name="Ikeo K."/>
            <person name="Iwama A."/>
            <person name="Ishikawa T."/>
            <person name="Jakt M."/>
            <person name="Kanapin A."/>
            <person name="Katoh M."/>
            <person name="Kawasawa Y."/>
            <person name="Kelso J."/>
            <person name="Kitamura H."/>
            <person name="Kitano H."/>
            <person name="Kollias G."/>
            <person name="Krishnan S.P."/>
            <person name="Kruger A."/>
            <person name="Kummerfeld S.K."/>
            <person name="Kurochkin I.V."/>
            <person name="Lareau L.F."/>
            <person name="Lazarevic D."/>
            <person name="Lipovich L."/>
            <person name="Liu J."/>
            <person name="Liuni S."/>
            <person name="McWilliam S."/>
            <person name="Madan Babu M."/>
            <person name="Madera M."/>
            <person name="Marchionni L."/>
            <person name="Matsuda H."/>
            <person name="Matsuzawa S."/>
            <person name="Miki H."/>
            <person name="Mignone F."/>
            <person name="Miyake S."/>
            <person name="Morris K."/>
            <person name="Mottagui-Tabar S."/>
            <person name="Mulder N."/>
            <person name="Nakano N."/>
            <person name="Nakauchi H."/>
            <person name="Ng P."/>
            <person name="Nilsson R."/>
            <person name="Nishiguchi S."/>
            <person name="Nishikawa S."/>
            <person name="Nori F."/>
            <person name="Ohara O."/>
            <person name="Okazaki Y."/>
            <person name="Orlando V."/>
            <person name="Pang K.C."/>
            <person name="Pavan W.J."/>
            <person name="Pavesi G."/>
            <person name="Pesole G."/>
            <person name="Petrovsky N."/>
            <person name="Piazza S."/>
            <person name="Reed J."/>
            <person name="Reid J.F."/>
            <person name="Ring B.Z."/>
            <person name="Ringwald M."/>
            <person name="Rost B."/>
            <person name="Ruan Y."/>
            <person name="Salzberg S.L."/>
            <person name="Sandelin A."/>
            <person name="Schneider C."/>
            <person name="Schoenbach C."/>
            <person name="Sekiguchi K."/>
            <person name="Semple C.A."/>
            <person name="Seno S."/>
            <person name="Sessa L."/>
            <person name="Sheng Y."/>
            <person name="Shibata Y."/>
            <person name="Shimada H."/>
            <person name="Shimada K."/>
            <person name="Silva D."/>
            <person name="Sinclair B."/>
            <person name="Sperling S."/>
            <person name="Stupka E."/>
            <person name="Sugiura K."/>
            <person name="Sultana R."/>
            <person name="Takenaka Y."/>
            <person name="Taki K."/>
            <person name="Tammoja K."/>
            <person name="Tan S.L."/>
            <person name="Tang S."/>
            <person name="Taylor M.S."/>
            <person name="Tegner J."/>
            <person name="Teichmann S.A."/>
            <person name="Ueda H.R."/>
            <person name="van Nimwegen E."/>
            <person name="Verardo R."/>
            <person name="Wei C.L."/>
            <person name="Yagi K."/>
            <person name="Yamanishi H."/>
            <person name="Zabarovsky E."/>
            <person name="Zhu S."/>
            <person name="Zimmer A."/>
            <person name="Hide W."/>
            <person name="Bult C."/>
            <person name="Grimmond S.M."/>
            <person name="Teasdale R.D."/>
            <person name="Liu E.T."/>
            <person name="Brusic V."/>
            <person name="Quackenbush J."/>
            <person name="Wahlestedt C."/>
            <person name="Mattick J.S."/>
            <person name="Hume D.A."/>
            <person name="Kai C."/>
            <person name="Sasaki D."/>
            <person name="Tomaru Y."/>
            <person name="Fukuda S."/>
            <person name="Kanamori-Katayama M."/>
            <person name="Suzuki M."/>
            <person name="Aoki J."/>
            <person name="Arakawa T."/>
            <person name="Iida J."/>
            <person name="Imamura K."/>
            <person name="Itoh M."/>
            <person name="Kato T."/>
            <person name="Kawaji H."/>
            <person name="Kawagashira N."/>
            <person name="Kawashima T."/>
            <person name="Kojima M."/>
            <person name="Kondo S."/>
            <person name="Konno H."/>
            <person name="Nakano K."/>
            <person name="Ninomiya N."/>
            <person name="Nishio T."/>
            <person name="Okada M."/>
            <person name="Plessy C."/>
            <person name="Shibata K."/>
            <person name="Shiraki T."/>
            <person name="Suzuki S."/>
            <person name="Tagami M."/>
            <person name="Waki K."/>
            <person name="Watahiki A."/>
            <person name="Okamura-Oho Y."/>
            <person name="Suzuki H."/>
            <person name="Kawai J."/>
            <person name="Hayashizaki Y."/>
        </authorList>
    </citation>
    <scope>NUCLEOTIDE SEQUENCE [LARGE SCALE MRNA]</scope>
    <scope>VARIANT 134-GLN-GLN-135 DEL</scope>
    <source>
        <strain>C57BL/6J</strain>
        <strain>NOD</strain>
        <tissue>Bone marrow</tissue>
        <tissue>Liver</tissue>
        <tissue>Lung</tissue>
        <tissue>Spleen</tissue>
        <tissue>Thymus</tissue>
    </source>
</reference>
<reference key="2">
    <citation type="journal article" date="2009" name="PLoS Biol.">
        <title>Lineage-specific biology revealed by a finished genome assembly of the mouse.</title>
        <authorList>
            <person name="Church D.M."/>
            <person name="Goodstadt L."/>
            <person name="Hillier L.W."/>
            <person name="Zody M.C."/>
            <person name="Goldstein S."/>
            <person name="She X."/>
            <person name="Bult C.J."/>
            <person name="Agarwala R."/>
            <person name="Cherry J.L."/>
            <person name="DiCuccio M."/>
            <person name="Hlavina W."/>
            <person name="Kapustin Y."/>
            <person name="Meric P."/>
            <person name="Maglott D."/>
            <person name="Birtle Z."/>
            <person name="Marques A.C."/>
            <person name="Graves T."/>
            <person name="Zhou S."/>
            <person name="Teague B."/>
            <person name="Potamousis K."/>
            <person name="Churas C."/>
            <person name="Place M."/>
            <person name="Herschleb J."/>
            <person name="Runnheim R."/>
            <person name="Forrest D."/>
            <person name="Amos-Landgraf J."/>
            <person name="Schwartz D.C."/>
            <person name="Cheng Z."/>
            <person name="Lindblad-Toh K."/>
            <person name="Eichler E.E."/>
            <person name="Ponting C.P."/>
        </authorList>
    </citation>
    <scope>NUCLEOTIDE SEQUENCE [LARGE SCALE GENOMIC DNA]</scope>
    <source>
        <strain>C57BL/6J</strain>
    </source>
</reference>
<reference key="3">
    <citation type="journal article" date="2004" name="Genome Res.">
        <title>The status, quality, and expansion of the NIH full-length cDNA project: the Mammalian Gene Collection (MGC).</title>
        <authorList>
            <consortium name="The MGC Project Team"/>
        </authorList>
    </citation>
    <scope>NUCLEOTIDE SEQUENCE [LARGE SCALE MRNA]</scope>
    <source>
        <strain>FVB/N</strain>
        <tissue>Mammary tumor</tissue>
    </source>
</reference>
<reference key="4">
    <citation type="journal article" date="2010" name="Cell">
        <title>A tissue-specific atlas of mouse protein phosphorylation and expression.</title>
        <authorList>
            <person name="Huttlin E.L."/>
            <person name="Jedrychowski M.P."/>
            <person name="Elias J.E."/>
            <person name="Goswami T."/>
            <person name="Rad R."/>
            <person name="Beausoleil S.A."/>
            <person name="Villen J."/>
            <person name="Haas W."/>
            <person name="Sowa M.E."/>
            <person name="Gygi S.P."/>
        </authorList>
    </citation>
    <scope>IDENTIFICATION BY MASS SPECTROMETRY [LARGE SCALE ANALYSIS]</scope>
    <source>
        <tissue>Heart</tissue>
        <tissue>Lung</tissue>
        <tissue>Spleen</tissue>
        <tissue>Testis</tissue>
    </source>
</reference>
<reference key="5">
    <citation type="journal article" date="2013" name="Mol. Cell">
        <title>SIRT5-mediated lysine desuccinylation impacts diverse metabolic pathways.</title>
        <authorList>
            <person name="Park J."/>
            <person name="Chen Y."/>
            <person name="Tishkoff D.X."/>
            <person name="Peng C."/>
            <person name="Tan M."/>
            <person name="Dai L."/>
            <person name="Xie Z."/>
            <person name="Zhang Y."/>
            <person name="Zwaans B.M."/>
            <person name="Skinner M.E."/>
            <person name="Lombard D.B."/>
            <person name="Zhao Y."/>
        </authorList>
    </citation>
    <scope>ACETYLATION [LARGE SCALE ANALYSIS] AT LYS-172 AND LYS-176</scope>
    <scope>IDENTIFICATION BY MASS SPECTROMETRY [LARGE SCALE ANALYSIS]</scope>
    <source>
        <tissue>Embryonic fibroblast</tissue>
    </source>
</reference>
<reference key="6">
    <citation type="journal article" date="2019" name="Genes Dev.">
        <title>Control of homologous recombination by the HROB-MCM8-MCM9 pathway.</title>
        <authorList>
            <person name="Hustedt N."/>
            <person name="Saito Y."/>
            <person name="Zimmermann M."/>
            <person name="Alvarez-Quilon A."/>
            <person name="Setiaputra D."/>
            <person name="Adam S."/>
            <person name="McEwan A."/>
            <person name="Yuan J.Y."/>
            <person name="Olivieri M."/>
            <person name="Zhao Y."/>
            <person name="Kanemaki M.T."/>
            <person name="Jurisicova A."/>
            <person name="Durocher D."/>
        </authorList>
    </citation>
    <scope>INTERACTION WITH HROB</scope>
</reference>
<keyword id="KW-0007">Acetylation</keyword>
<keyword id="KW-0013">ADP-ribosylation</keyword>
<keyword id="KW-0227">DNA damage</keyword>
<keyword id="KW-0233">DNA recombination</keyword>
<keyword id="KW-0234">DNA repair</keyword>
<keyword id="KW-0235">DNA replication</keyword>
<keyword id="KW-0238">DNA-binding</keyword>
<keyword id="KW-1017">Isopeptide bond</keyword>
<keyword id="KW-0479">Metal-binding</keyword>
<keyword id="KW-0539">Nucleus</keyword>
<keyword id="KW-0597">Phosphoprotein</keyword>
<keyword id="KW-1185">Reference proteome</keyword>
<keyword id="KW-0832">Ubl conjugation</keyword>
<keyword id="KW-0862">Zinc</keyword>
<keyword id="KW-0863">Zinc-finger</keyword>
<dbReference type="EMBL" id="AK148035">
    <property type="protein sequence ID" value="BAE28302.1"/>
    <property type="molecule type" value="mRNA"/>
</dbReference>
<dbReference type="EMBL" id="AK150785">
    <property type="protein sequence ID" value="BAE29849.1"/>
    <property type="molecule type" value="mRNA"/>
</dbReference>
<dbReference type="EMBL" id="AK151590">
    <property type="protein sequence ID" value="BAE30530.1"/>
    <property type="molecule type" value="mRNA"/>
</dbReference>
<dbReference type="EMBL" id="AK153144">
    <property type="protein sequence ID" value="BAE31755.1"/>
    <property type="molecule type" value="mRNA"/>
</dbReference>
<dbReference type="EMBL" id="AK165316">
    <property type="protein sequence ID" value="BAE38134.1"/>
    <property type="molecule type" value="mRNA"/>
</dbReference>
<dbReference type="EMBL" id="AK165944">
    <property type="protein sequence ID" value="BAE38476.1"/>
    <property type="molecule type" value="mRNA"/>
</dbReference>
<dbReference type="EMBL" id="AK167598">
    <property type="protein sequence ID" value="BAE39655.1"/>
    <property type="molecule type" value="mRNA"/>
</dbReference>
<dbReference type="EMBL" id="AK169599">
    <property type="protein sequence ID" value="BAE41250.1"/>
    <property type="molecule type" value="mRNA"/>
</dbReference>
<dbReference type="EMBL" id="AL603834">
    <property type="status" value="NOT_ANNOTATED_CDS"/>
    <property type="molecule type" value="Genomic_DNA"/>
</dbReference>
<dbReference type="EMBL" id="BC019119">
    <property type="protein sequence ID" value="AAH19119.1"/>
    <property type="molecule type" value="mRNA"/>
</dbReference>
<dbReference type="CCDS" id="CCDS25044.1"/>
<dbReference type="RefSeq" id="NP_001157695.1">
    <property type="nucleotide sequence ID" value="NM_001164223.1"/>
</dbReference>
<dbReference type="RefSeq" id="NP_080929.1">
    <property type="nucleotide sequence ID" value="NM_026653.2"/>
</dbReference>
<dbReference type="EMDB" id="EMD-2789"/>
<dbReference type="SMR" id="Q8VEE4"/>
<dbReference type="BioGRID" id="212778">
    <property type="interactions" value="44"/>
</dbReference>
<dbReference type="CORUM" id="Q8VEE4"/>
<dbReference type="FunCoup" id="Q8VEE4">
    <property type="interactions" value="3886"/>
</dbReference>
<dbReference type="IntAct" id="Q8VEE4">
    <property type="interactions" value="4"/>
</dbReference>
<dbReference type="STRING" id="10090.ENSMUSP00000000767"/>
<dbReference type="GlyGen" id="Q8VEE4">
    <property type="glycosylation" value="2 sites, 1 O-linked glycan (1 site)"/>
</dbReference>
<dbReference type="iPTMnet" id="Q8VEE4"/>
<dbReference type="PhosphoSitePlus" id="Q8VEE4"/>
<dbReference type="SwissPalm" id="Q8VEE4"/>
<dbReference type="jPOST" id="Q8VEE4"/>
<dbReference type="PaxDb" id="10090-ENSMUSP00000000767"/>
<dbReference type="PeptideAtlas" id="Q8VEE4"/>
<dbReference type="ProteomicsDB" id="255240"/>
<dbReference type="Pumba" id="Q8VEE4"/>
<dbReference type="Antibodypedia" id="1868">
    <property type="antibodies" value="497 antibodies from 40 providers"/>
</dbReference>
<dbReference type="DNASU" id="68275"/>
<dbReference type="Ensembl" id="ENSMUST00000092907.12">
    <property type="protein sequence ID" value="ENSMUSP00000090585.6"/>
    <property type="gene ID" value="ENSMUSG00000000751.14"/>
</dbReference>
<dbReference type="GeneID" id="68275"/>
<dbReference type="KEGG" id="mmu:68275"/>
<dbReference type="UCSC" id="uc007kdi.2">
    <property type="organism name" value="mouse"/>
</dbReference>
<dbReference type="AGR" id="MGI:1915525"/>
<dbReference type="CTD" id="6117"/>
<dbReference type="MGI" id="MGI:1915525">
    <property type="gene designation" value="Rpa1"/>
</dbReference>
<dbReference type="VEuPathDB" id="HostDB:ENSMUSG00000000751"/>
<dbReference type="eggNOG" id="KOG0851">
    <property type="taxonomic scope" value="Eukaryota"/>
</dbReference>
<dbReference type="GeneTree" id="ENSGT00390000012403"/>
<dbReference type="HOGENOM" id="CLU_012393_2_1_1"/>
<dbReference type="InParanoid" id="Q8VEE4"/>
<dbReference type="OMA" id="DQCDAFY"/>
<dbReference type="OrthoDB" id="1751331at2759"/>
<dbReference type="PhylomeDB" id="Q8VEE4"/>
<dbReference type="Reactome" id="R-MMU-110312">
    <property type="pathway name" value="Translesion synthesis by REV1"/>
</dbReference>
<dbReference type="Reactome" id="R-MMU-110314">
    <property type="pathway name" value="Recognition of DNA damage by PCNA-containing replication complex"/>
</dbReference>
<dbReference type="Reactome" id="R-MMU-110320">
    <property type="pathway name" value="Translesion Synthesis by POLH"/>
</dbReference>
<dbReference type="Reactome" id="R-MMU-174437">
    <property type="pathway name" value="Removal of the Flap Intermediate from the C-strand"/>
</dbReference>
<dbReference type="Reactome" id="R-MMU-176187">
    <property type="pathway name" value="Activation of ATR in response to replication stress"/>
</dbReference>
<dbReference type="Reactome" id="R-MMU-3108214">
    <property type="pathway name" value="SUMOylation of DNA damage response and repair proteins"/>
</dbReference>
<dbReference type="Reactome" id="R-MMU-3371453">
    <property type="pathway name" value="Regulation of HSF1-mediated heat shock response"/>
</dbReference>
<dbReference type="Reactome" id="R-MMU-5358565">
    <property type="pathway name" value="Mismatch repair (MMR) directed by MSH2:MSH6 (MutSalpha)"/>
</dbReference>
<dbReference type="Reactome" id="R-MMU-5358606">
    <property type="pathway name" value="Mismatch repair (MMR) directed by MSH2:MSH3 (MutSbeta)"/>
</dbReference>
<dbReference type="Reactome" id="R-MMU-5651801">
    <property type="pathway name" value="PCNA-Dependent Long Patch Base Excision Repair"/>
</dbReference>
<dbReference type="Reactome" id="R-MMU-5655862">
    <property type="pathway name" value="Translesion synthesis by POLK"/>
</dbReference>
<dbReference type="Reactome" id="R-MMU-5656121">
    <property type="pathway name" value="Translesion synthesis by POLI"/>
</dbReference>
<dbReference type="Reactome" id="R-MMU-5656169">
    <property type="pathway name" value="Termination of translesion DNA synthesis"/>
</dbReference>
<dbReference type="Reactome" id="R-MMU-5685938">
    <property type="pathway name" value="HDR through Single Strand Annealing (SSA)"/>
</dbReference>
<dbReference type="Reactome" id="R-MMU-5685942">
    <property type="pathway name" value="HDR through Homologous Recombination (HRR)"/>
</dbReference>
<dbReference type="Reactome" id="R-MMU-5693607">
    <property type="pathway name" value="Processing of DNA double-strand break ends"/>
</dbReference>
<dbReference type="Reactome" id="R-MMU-5696395">
    <property type="pathway name" value="Formation of Incision Complex in GG-NER"/>
</dbReference>
<dbReference type="Reactome" id="R-MMU-5696397">
    <property type="pathway name" value="Gap-filling DNA repair synthesis and ligation in GG-NER"/>
</dbReference>
<dbReference type="Reactome" id="R-MMU-5696400">
    <property type="pathway name" value="Dual Incision in GG-NER"/>
</dbReference>
<dbReference type="Reactome" id="R-MMU-6782135">
    <property type="pathway name" value="Dual incision in TC-NER"/>
</dbReference>
<dbReference type="Reactome" id="R-MMU-6782210">
    <property type="pathway name" value="Gap-filling DNA repair synthesis and ligation in TC-NER"/>
</dbReference>
<dbReference type="Reactome" id="R-MMU-6783310">
    <property type="pathway name" value="Fanconi Anemia Pathway"/>
</dbReference>
<dbReference type="Reactome" id="R-MMU-6804756">
    <property type="pathway name" value="Regulation of TP53 Activity through Phosphorylation"/>
</dbReference>
<dbReference type="Reactome" id="R-MMU-68962">
    <property type="pathway name" value="Activation of the pre-replicative complex"/>
</dbReference>
<dbReference type="Reactome" id="R-MMU-69166">
    <property type="pathway name" value="Removal of the Flap Intermediate"/>
</dbReference>
<dbReference type="Reactome" id="R-MMU-69473">
    <property type="pathway name" value="G2/M DNA damage checkpoint"/>
</dbReference>
<dbReference type="BioGRID-ORCS" id="68275">
    <property type="hits" value="41 hits in 115 CRISPR screens"/>
</dbReference>
<dbReference type="ChiTaRS" id="Rpa1">
    <property type="organism name" value="mouse"/>
</dbReference>
<dbReference type="PRO" id="PR:Q8VEE4"/>
<dbReference type="Proteomes" id="UP000000589">
    <property type="component" value="Chromosome 11"/>
</dbReference>
<dbReference type="RNAct" id="Q8VEE4">
    <property type="molecule type" value="protein"/>
</dbReference>
<dbReference type="Bgee" id="ENSMUSG00000000751">
    <property type="expression patterns" value="Expressed in respiratory primordium and 276 other cell types or tissues"/>
</dbReference>
<dbReference type="ExpressionAtlas" id="Q8VEE4">
    <property type="expression patterns" value="baseline and differential"/>
</dbReference>
<dbReference type="GO" id="GO:0000793">
    <property type="term" value="C:condensed chromosome"/>
    <property type="evidence" value="ECO:0000314"/>
    <property type="project" value="MGI"/>
</dbReference>
<dbReference type="GO" id="GO:0000794">
    <property type="term" value="C:condensed nuclear chromosome"/>
    <property type="evidence" value="ECO:0000314"/>
    <property type="project" value="MGI"/>
</dbReference>
<dbReference type="GO" id="GO:0005662">
    <property type="term" value="C:DNA replication factor A complex"/>
    <property type="evidence" value="ECO:0000250"/>
    <property type="project" value="UniProtKB"/>
</dbReference>
<dbReference type="GO" id="GO:0000800">
    <property type="term" value="C:lateral element"/>
    <property type="evidence" value="ECO:0000314"/>
    <property type="project" value="MGI"/>
</dbReference>
<dbReference type="GO" id="GO:0001673">
    <property type="term" value="C:male germ cell nucleus"/>
    <property type="evidence" value="ECO:0000314"/>
    <property type="project" value="MGI"/>
</dbReference>
<dbReference type="GO" id="GO:0005654">
    <property type="term" value="C:nucleoplasm"/>
    <property type="evidence" value="ECO:0000304"/>
    <property type="project" value="Reactome"/>
</dbReference>
<dbReference type="GO" id="GO:0005634">
    <property type="term" value="C:nucleus"/>
    <property type="evidence" value="ECO:0000314"/>
    <property type="project" value="MGI"/>
</dbReference>
<dbReference type="GO" id="GO:0016605">
    <property type="term" value="C:PML body"/>
    <property type="evidence" value="ECO:0000266"/>
    <property type="project" value="MGI"/>
</dbReference>
<dbReference type="GO" id="GO:0090734">
    <property type="term" value="C:site of DNA damage"/>
    <property type="evidence" value="ECO:0000250"/>
    <property type="project" value="UniProtKB"/>
</dbReference>
<dbReference type="GO" id="GO:0035861">
    <property type="term" value="C:site of double-strand break"/>
    <property type="evidence" value="ECO:0007669"/>
    <property type="project" value="Ensembl"/>
</dbReference>
<dbReference type="GO" id="GO:0003682">
    <property type="term" value="F:chromatin binding"/>
    <property type="evidence" value="ECO:0000314"/>
    <property type="project" value="MGI"/>
</dbReference>
<dbReference type="GO" id="GO:0140463">
    <property type="term" value="F:chromatin-protein adaptor activity"/>
    <property type="evidence" value="ECO:0007669"/>
    <property type="project" value="Ensembl"/>
</dbReference>
<dbReference type="GO" id="GO:0003684">
    <property type="term" value="F:damaged DNA binding"/>
    <property type="evidence" value="ECO:0000250"/>
    <property type="project" value="UniProtKB"/>
</dbReference>
<dbReference type="GO" id="GO:0098505">
    <property type="term" value="F:G-rich strand telomeric DNA binding"/>
    <property type="evidence" value="ECO:0007669"/>
    <property type="project" value="Ensembl"/>
</dbReference>
<dbReference type="GO" id="GO:0003697">
    <property type="term" value="F:single-stranded DNA binding"/>
    <property type="evidence" value="ECO:0000250"/>
    <property type="project" value="UniProtKB"/>
</dbReference>
<dbReference type="GO" id="GO:0008270">
    <property type="term" value="F:zinc ion binding"/>
    <property type="evidence" value="ECO:0007669"/>
    <property type="project" value="UniProtKB-KW"/>
</dbReference>
<dbReference type="GO" id="GO:0006284">
    <property type="term" value="P:base-excision repair"/>
    <property type="evidence" value="ECO:0000250"/>
    <property type="project" value="UniProtKB"/>
</dbReference>
<dbReference type="GO" id="GO:0051276">
    <property type="term" value="P:chromosome organization"/>
    <property type="evidence" value="ECO:0000315"/>
    <property type="project" value="MGI"/>
</dbReference>
<dbReference type="GO" id="GO:0006974">
    <property type="term" value="P:DNA damage response"/>
    <property type="evidence" value="ECO:0000250"/>
    <property type="project" value="UniProtKB"/>
</dbReference>
<dbReference type="GO" id="GO:0006260">
    <property type="term" value="P:DNA replication"/>
    <property type="evidence" value="ECO:0000250"/>
    <property type="project" value="UniProtKB"/>
</dbReference>
<dbReference type="GO" id="GO:0000724">
    <property type="term" value="P:double-strand break repair via homologous recombination"/>
    <property type="evidence" value="ECO:0000315"/>
    <property type="project" value="MGI"/>
</dbReference>
<dbReference type="GO" id="GO:0030097">
    <property type="term" value="P:hemopoiesis"/>
    <property type="evidence" value="ECO:0000315"/>
    <property type="project" value="MGI"/>
</dbReference>
<dbReference type="GO" id="GO:0048873">
    <property type="term" value="P:homeostasis of number of cells within a tissue"/>
    <property type="evidence" value="ECO:0000315"/>
    <property type="project" value="MGI"/>
</dbReference>
<dbReference type="GO" id="GO:0001701">
    <property type="term" value="P:in utero embryonic development"/>
    <property type="evidence" value="ECO:0000315"/>
    <property type="project" value="MGI"/>
</dbReference>
<dbReference type="GO" id="GO:0051321">
    <property type="term" value="P:meiotic cell cycle"/>
    <property type="evidence" value="ECO:0000314"/>
    <property type="project" value="MGI"/>
</dbReference>
<dbReference type="GO" id="GO:0006298">
    <property type="term" value="P:mismatch repair"/>
    <property type="evidence" value="ECO:0000250"/>
    <property type="project" value="UniProtKB"/>
</dbReference>
<dbReference type="GO" id="GO:0006289">
    <property type="term" value="P:nucleotide-excision repair"/>
    <property type="evidence" value="ECO:0000250"/>
    <property type="project" value="UniProtKB"/>
</dbReference>
<dbReference type="GO" id="GO:0008284">
    <property type="term" value="P:positive regulation of cell population proliferation"/>
    <property type="evidence" value="ECO:0000315"/>
    <property type="project" value="MGI"/>
</dbReference>
<dbReference type="GO" id="GO:0034502">
    <property type="term" value="P:protein localization to chromosome"/>
    <property type="evidence" value="ECO:0000250"/>
    <property type="project" value="UniProtKB"/>
</dbReference>
<dbReference type="GO" id="GO:1990166">
    <property type="term" value="P:protein localization to site of double-strand break"/>
    <property type="evidence" value="ECO:0007669"/>
    <property type="project" value="Ensembl"/>
</dbReference>
<dbReference type="GO" id="GO:0000723">
    <property type="term" value="P:telomere maintenance"/>
    <property type="evidence" value="ECO:0007669"/>
    <property type="project" value="Ensembl"/>
</dbReference>
<dbReference type="CDD" id="cd04474">
    <property type="entry name" value="RPA1_DBD_A"/>
    <property type="match status" value="1"/>
</dbReference>
<dbReference type="CDD" id="cd04475">
    <property type="entry name" value="RPA1_DBD_B"/>
    <property type="match status" value="1"/>
</dbReference>
<dbReference type="CDD" id="cd04476">
    <property type="entry name" value="RPA1_DBD_C"/>
    <property type="match status" value="1"/>
</dbReference>
<dbReference type="CDD" id="cd04477">
    <property type="entry name" value="RPA1N"/>
    <property type="match status" value="1"/>
</dbReference>
<dbReference type="FunFam" id="2.40.50.140:FF:000041">
    <property type="entry name" value="Replication protein A subunit"/>
    <property type="match status" value="1"/>
</dbReference>
<dbReference type="FunFam" id="2.40.50.140:FF:000064">
    <property type="entry name" value="Replication protein A subunit"/>
    <property type="match status" value="1"/>
</dbReference>
<dbReference type="FunFam" id="2.40.50.140:FF:000090">
    <property type="entry name" value="Replication protein A subunit"/>
    <property type="match status" value="1"/>
</dbReference>
<dbReference type="FunFam" id="2.40.50.140:FF:000117">
    <property type="entry name" value="Replication protein A subunit"/>
    <property type="match status" value="1"/>
</dbReference>
<dbReference type="Gene3D" id="2.40.50.140">
    <property type="entry name" value="Nucleic acid-binding proteins"/>
    <property type="match status" value="4"/>
</dbReference>
<dbReference type="InterPro" id="IPR047192">
    <property type="entry name" value="Euk_RPA1_DBD_C"/>
</dbReference>
<dbReference type="InterPro" id="IPR012340">
    <property type="entry name" value="NA-bd_OB-fold"/>
</dbReference>
<dbReference type="InterPro" id="IPR004365">
    <property type="entry name" value="NA-bd_OB_tRNA"/>
</dbReference>
<dbReference type="InterPro" id="IPR013955">
    <property type="entry name" value="Rep_factor-A_C"/>
</dbReference>
<dbReference type="InterPro" id="IPR007199">
    <property type="entry name" value="Rep_factor-A_N"/>
</dbReference>
<dbReference type="InterPro" id="IPR031657">
    <property type="entry name" value="REPA_OB_2"/>
</dbReference>
<dbReference type="InterPro" id="IPR004591">
    <property type="entry name" value="Rfa1"/>
</dbReference>
<dbReference type="NCBIfam" id="TIGR00617">
    <property type="entry name" value="rpa1"/>
    <property type="match status" value="1"/>
</dbReference>
<dbReference type="PANTHER" id="PTHR47165">
    <property type="entry name" value="OS03G0429900 PROTEIN"/>
    <property type="match status" value="1"/>
</dbReference>
<dbReference type="PANTHER" id="PTHR47165:SF4">
    <property type="entry name" value="OS03G0429900 PROTEIN"/>
    <property type="match status" value="1"/>
</dbReference>
<dbReference type="Pfam" id="PF04057">
    <property type="entry name" value="Rep-A_N"/>
    <property type="match status" value="1"/>
</dbReference>
<dbReference type="Pfam" id="PF08646">
    <property type="entry name" value="Rep_fac-A_C"/>
    <property type="match status" value="1"/>
</dbReference>
<dbReference type="Pfam" id="PF16900">
    <property type="entry name" value="REPA_OB_2"/>
    <property type="match status" value="1"/>
</dbReference>
<dbReference type="Pfam" id="PF01336">
    <property type="entry name" value="tRNA_anti-codon"/>
    <property type="match status" value="1"/>
</dbReference>
<dbReference type="SUPFAM" id="SSF50249">
    <property type="entry name" value="Nucleic acid-binding proteins"/>
    <property type="match status" value="4"/>
</dbReference>